<sequence length="487" mass="51399">MAQIYAQTLTETAAALAQGTLTAEEAVRACIDRIEATEPAVHALLATRCEEALAEARAMDAAGYDPAKPLWGVPVTVKDVLSTSGVATTCGSRILENYVPFFDAAAVSRLKDAGAVILAKTNMDEFAMGSSTEKSAFKTTHNPWDLQRVPGGSSGGSAASVAAGQCFASLGTDTGGSVRQPASFCGCVGLKPTYGRVSRYGLVAYGSSLDQIGPVTRSVEDAARVLAVIAGHDARDTTCSDRPVDDYLAALGSRSDLAGLRIGVPAEYWGEGLSGEVDSCCREALKKAEELGATLVDISLPNSRHAIAVYYIVAMAEASSNLARFDGVRFGHRSDNAASLPELYINSRSEGFGDEVQRRIMLGTYVLSSGYYDAYYRKAAQVRRLILQDFEKAFEQCDVICGPASPVTAWKHGAMSGDPLTMYLLDIFTISLNLAGLPGLSLPVGTGTESGMPVGLQILGKAFDEATLLSVAHVLEQRIGRTPVAQI</sequence>
<name>GATA_OLEA2</name>
<evidence type="ECO:0000255" key="1">
    <source>
        <dbReference type="HAMAP-Rule" id="MF_00120"/>
    </source>
</evidence>
<protein>
    <recommendedName>
        <fullName evidence="1">Glutamyl-tRNA(Gln) amidotransferase subunit A</fullName>
        <shortName evidence="1">Glu-ADT subunit A</shortName>
        <ecNumber evidence="1">6.3.5.7</ecNumber>
    </recommendedName>
</protein>
<proteinExistence type="inferred from homology"/>
<feature type="chain" id="PRO_0000241095" description="Glutamyl-tRNA(Gln) amidotransferase subunit A">
    <location>
        <begin position="1"/>
        <end position="487"/>
    </location>
</feature>
<feature type="active site" description="Charge relay system" evidence="1">
    <location>
        <position position="78"/>
    </location>
</feature>
<feature type="active site" description="Charge relay system" evidence="1">
    <location>
        <position position="153"/>
    </location>
</feature>
<feature type="active site" description="Acyl-ester intermediate" evidence="1">
    <location>
        <position position="177"/>
    </location>
</feature>
<keyword id="KW-0067">ATP-binding</keyword>
<keyword id="KW-0436">Ligase</keyword>
<keyword id="KW-0547">Nucleotide-binding</keyword>
<keyword id="KW-0648">Protein biosynthesis</keyword>
<keyword id="KW-1185">Reference proteome</keyword>
<organism>
    <name type="scientific">Oleidesulfovibrio alaskensis (strain ATCC BAA-1058 / DSM 17464 / G20)</name>
    <name type="common">Desulfovibrio alaskensis</name>
    <dbReference type="NCBI Taxonomy" id="207559"/>
    <lineage>
        <taxon>Bacteria</taxon>
        <taxon>Pseudomonadati</taxon>
        <taxon>Thermodesulfobacteriota</taxon>
        <taxon>Desulfovibrionia</taxon>
        <taxon>Desulfovibrionales</taxon>
        <taxon>Desulfovibrionaceae</taxon>
        <taxon>Oleidesulfovibrio</taxon>
    </lineage>
</organism>
<gene>
    <name evidence="1" type="primary">gatA</name>
    <name type="ordered locus">Dde_1020</name>
</gene>
<reference key="1">
    <citation type="journal article" date="2011" name="J. Bacteriol.">
        <title>Complete genome sequence and updated annotation of Desulfovibrio alaskensis G20.</title>
        <authorList>
            <person name="Hauser L.J."/>
            <person name="Land M.L."/>
            <person name="Brown S.D."/>
            <person name="Larimer F."/>
            <person name="Keller K.L."/>
            <person name="Rapp-Giles B.J."/>
            <person name="Price M.N."/>
            <person name="Lin M."/>
            <person name="Bruce D.C."/>
            <person name="Detter J.C."/>
            <person name="Tapia R."/>
            <person name="Han C.S."/>
            <person name="Goodwin L.A."/>
            <person name="Cheng J.F."/>
            <person name="Pitluck S."/>
            <person name="Copeland A."/>
            <person name="Lucas S."/>
            <person name="Nolan M."/>
            <person name="Lapidus A.L."/>
            <person name="Palumbo A.V."/>
            <person name="Wall J.D."/>
        </authorList>
    </citation>
    <scope>NUCLEOTIDE SEQUENCE [LARGE SCALE GENOMIC DNA]</scope>
    <source>
        <strain>ATCC BAA-1058 / DSM 17464 / G20</strain>
    </source>
</reference>
<dbReference type="EC" id="6.3.5.7" evidence="1"/>
<dbReference type="EMBL" id="CP000112">
    <property type="protein sequence ID" value="ABB37821.1"/>
    <property type="molecule type" value="Genomic_DNA"/>
</dbReference>
<dbReference type="RefSeq" id="WP_011367058.1">
    <property type="nucleotide sequence ID" value="NC_007519.1"/>
</dbReference>
<dbReference type="SMR" id="Q313S5"/>
<dbReference type="STRING" id="207559.Dde_1020"/>
<dbReference type="KEGG" id="dde:Dde_1020"/>
<dbReference type="eggNOG" id="COG0154">
    <property type="taxonomic scope" value="Bacteria"/>
</dbReference>
<dbReference type="HOGENOM" id="CLU_009600_0_3_7"/>
<dbReference type="Proteomes" id="UP000002710">
    <property type="component" value="Chromosome"/>
</dbReference>
<dbReference type="GO" id="GO:0030956">
    <property type="term" value="C:glutamyl-tRNA(Gln) amidotransferase complex"/>
    <property type="evidence" value="ECO:0007669"/>
    <property type="project" value="InterPro"/>
</dbReference>
<dbReference type="GO" id="GO:0005524">
    <property type="term" value="F:ATP binding"/>
    <property type="evidence" value="ECO:0007669"/>
    <property type="project" value="UniProtKB-KW"/>
</dbReference>
<dbReference type="GO" id="GO:0050567">
    <property type="term" value="F:glutaminyl-tRNA synthase (glutamine-hydrolyzing) activity"/>
    <property type="evidence" value="ECO:0007669"/>
    <property type="project" value="UniProtKB-UniRule"/>
</dbReference>
<dbReference type="GO" id="GO:0006412">
    <property type="term" value="P:translation"/>
    <property type="evidence" value="ECO:0007669"/>
    <property type="project" value="UniProtKB-UniRule"/>
</dbReference>
<dbReference type="Gene3D" id="3.90.1300.10">
    <property type="entry name" value="Amidase signature (AS) domain"/>
    <property type="match status" value="1"/>
</dbReference>
<dbReference type="HAMAP" id="MF_00120">
    <property type="entry name" value="GatA"/>
    <property type="match status" value="1"/>
</dbReference>
<dbReference type="InterPro" id="IPR000120">
    <property type="entry name" value="Amidase"/>
</dbReference>
<dbReference type="InterPro" id="IPR020556">
    <property type="entry name" value="Amidase_CS"/>
</dbReference>
<dbReference type="InterPro" id="IPR023631">
    <property type="entry name" value="Amidase_dom"/>
</dbReference>
<dbReference type="InterPro" id="IPR036928">
    <property type="entry name" value="AS_sf"/>
</dbReference>
<dbReference type="InterPro" id="IPR004412">
    <property type="entry name" value="GatA"/>
</dbReference>
<dbReference type="NCBIfam" id="TIGR00132">
    <property type="entry name" value="gatA"/>
    <property type="match status" value="1"/>
</dbReference>
<dbReference type="PANTHER" id="PTHR11895:SF151">
    <property type="entry name" value="GLUTAMYL-TRNA(GLN) AMIDOTRANSFERASE SUBUNIT A"/>
    <property type="match status" value="1"/>
</dbReference>
<dbReference type="PANTHER" id="PTHR11895">
    <property type="entry name" value="TRANSAMIDASE"/>
    <property type="match status" value="1"/>
</dbReference>
<dbReference type="Pfam" id="PF01425">
    <property type="entry name" value="Amidase"/>
    <property type="match status" value="1"/>
</dbReference>
<dbReference type="SUPFAM" id="SSF75304">
    <property type="entry name" value="Amidase signature (AS) enzymes"/>
    <property type="match status" value="1"/>
</dbReference>
<dbReference type="PROSITE" id="PS00571">
    <property type="entry name" value="AMIDASES"/>
    <property type="match status" value="1"/>
</dbReference>
<accession>Q313S5</accession>
<comment type="function">
    <text evidence="1">Allows the formation of correctly charged Gln-tRNA(Gln) through the transamidation of misacylated Glu-tRNA(Gln) in organisms which lack glutaminyl-tRNA synthetase. The reaction takes place in the presence of glutamine and ATP through an activated gamma-phospho-Glu-tRNA(Gln).</text>
</comment>
<comment type="catalytic activity">
    <reaction evidence="1">
        <text>L-glutamyl-tRNA(Gln) + L-glutamine + ATP + H2O = L-glutaminyl-tRNA(Gln) + L-glutamate + ADP + phosphate + H(+)</text>
        <dbReference type="Rhea" id="RHEA:17521"/>
        <dbReference type="Rhea" id="RHEA-COMP:9681"/>
        <dbReference type="Rhea" id="RHEA-COMP:9684"/>
        <dbReference type="ChEBI" id="CHEBI:15377"/>
        <dbReference type="ChEBI" id="CHEBI:15378"/>
        <dbReference type="ChEBI" id="CHEBI:29985"/>
        <dbReference type="ChEBI" id="CHEBI:30616"/>
        <dbReference type="ChEBI" id="CHEBI:43474"/>
        <dbReference type="ChEBI" id="CHEBI:58359"/>
        <dbReference type="ChEBI" id="CHEBI:78520"/>
        <dbReference type="ChEBI" id="CHEBI:78521"/>
        <dbReference type="ChEBI" id="CHEBI:456216"/>
        <dbReference type="EC" id="6.3.5.7"/>
    </reaction>
</comment>
<comment type="subunit">
    <text evidence="1">Heterotrimer of A, B and C subunits.</text>
</comment>
<comment type="similarity">
    <text evidence="1">Belongs to the amidase family. GatA subfamily.</text>
</comment>